<keyword id="KW-0256">Endoplasmic reticulum</keyword>
<keyword id="KW-0472">Membrane</keyword>
<keyword id="KW-1185">Reference proteome</keyword>
<keyword id="KW-0812">Transmembrane</keyword>
<keyword id="KW-1133">Transmembrane helix</keyword>
<accession>Q9P3E6</accession>
<comment type="subcellular location">
    <subcellularLocation>
        <location evidence="1">Endoplasmic reticulum membrane</location>
        <topology evidence="1">Multi-pass membrane protein</topology>
    </subcellularLocation>
</comment>
<protein>
    <recommendedName>
        <fullName>Uncharacterized membrane protein C750.05c</fullName>
    </recommendedName>
</protein>
<reference key="1">
    <citation type="journal article" date="2002" name="Nature">
        <title>The genome sequence of Schizosaccharomyces pombe.</title>
        <authorList>
            <person name="Wood V."/>
            <person name="Gwilliam R."/>
            <person name="Rajandream M.A."/>
            <person name="Lyne M.H."/>
            <person name="Lyne R."/>
            <person name="Stewart A."/>
            <person name="Sgouros J.G."/>
            <person name="Peat N."/>
            <person name="Hayles J."/>
            <person name="Baker S.G."/>
            <person name="Basham D."/>
            <person name="Bowman S."/>
            <person name="Brooks K."/>
            <person name="Brown D."/>
            <person name="Brown S."/>
            <person name="Chillingworth T."/>
            <person name="Churcher C.M."/>
            <person name="Collins M."/>
            <person name="Connor R."/>
            <person name="Cronin A."/>
            <person name="Davis P."/>
            <person name="Feltwell T."/>
            <person name="Fraser A."/>
            <person name="Gentles S."/>
            <person name="Goble A."/>
            <person name="Hamlin N."/>
            <person name="Harris D.E."/>
            <person name="Hidalgo J."/>
            <person name="Hodgson G."/>
            <person name="Holroyd S."/>
            <person name="Hornsby T."/>
            <person name="Howarth S."/>
            <person name="Huckle E.J."/>
            <person name="Hunt S."/>
            <person name="Jagels K."/>
            <person name="James K.D."/>
            <person name="Jones L."/>
            <person name="Jones M."/>
            <person name="Leather S."/>
            <person name="McDonald S."/>
            <person name="McLean J."/>
            <person name="Mooney P."/>
            <person name="Moule S."/>
            <person name="Mungall K.L."/>
            <person name="Murphy L.D."/>
            <person name="Niblett D."/>
            <person name="Odell C."/>
            <person name="Oliver K."/>
            <person name="O'Neil S."/>
            <person name="Pearson D."/>
            <person name="Quail M.A."/>
            <person name="Rabbinowitsch E."/>
            <person name="Rutherford K.M."/>
            <person name="Rutter S."/>
            <person name="Saunders D."/>
            <person name="Seeger K."/>
            <person name="Sharp S."/>
            <person name="Skelton J."/>
            <person name="Simmonds M.N."/>
            <person name="Squares R."/>
            <person name="Squares S."/>
            <person name="Stevens K."/>
            <person name="Taylor K."/>
            <person name="Taylor R.G."/>
            <person name="Tivey A."/>
            <person name="Walsh S.V."/>
            <person name="Warren T."/>
            <person name="Whitehead S."/>
            <person name="Woodward J.R."/>
            <person name="Volckaert G."/>
            <person name="Aert R."/>
            <person name="Robben J."/>
            <person name="Grymonprez B."/>
            <person name="Weltjens I."/>
            <person name="Vanstreels E."/>
            <person name="Rieger M."/>
            <person name="Schaefer M."/>
            <person name="Mueller-Auer S."/>
            <person name="Gabel C."/>
            <person name="Fuchs M."/>
            <person name="Duesterhoeft A."/>
            <person name="Fritzc C."/>
            <person name="Holzer E."/>
            <person name="Moestl D."/>
            <person name="Hilbert H."/>
            <person name="Borzym K."/>
            <person name="Langer I."/>
            <person name="Beck A."/>
            <person name="Lehrach H."/>
            <person name="Reinhardt R."/>
            <person name="Pohl T.M."/>
            <person name="Eger P."/>
            <person name="Zimmermann W."/>
            <person name="Wedler H."/>
            <person name="Wambutt R."/>
            <person name="Purnelle B."/>
            <person name="Goffeau A."/>
            <person name="Cadieu E."/>
            <person name="Dreano S."/>
            <person name="Gloux S."/>
            <person name="Lelaure V."/>
            <person name="Mottier S."/>
            <person name="Galibert F."/>
            <person name="Aves S.J."/>
            <person name="Xiang Z."/>
            <person name="Hunt C."/>
            <person name="Moore K."/>
            <person name="Hurst S.M."/>
            <person name="Lucas M."/>
            <person name="Rochet M."/>
            <person name="Gaillardin C."/>
            <person name="Tallada V.A."/>
            <person name="Garzon A."/>
            <person name="Thode G."/>
            <person name="Daga R.R."/>
            <person name="Cruzado L."/>
            <person name="Jimenez J."/>
            <person name="Sanchez M."/>
            <person name="del Rey F."/>
            <person name="Benito J."/>
            <person name="Dominguez A."/>
            <person name="Revuelta J.L."/>
            <person name="Moreno S."/>
            <person name="Armstrong J."/>
            <person name="Forsburg S.L."/>
            <person name="Cerutti L."/>
            <person name="Lowe T."/>
            <person name="McCombie W.R."/>
            <person name="Paulsen I."/>
            <person name="Potashkin J."/>
            <person name="Shpakovski G.V."/>
            <person name="Ussery D."/>
            <person name="Barrell B.G."/>
            <person name="Nurse P."/>
        </authorList>
    </citation>
    <scope>NUCLEOTIDE SEQUENCE [LARGE SCALE GENOMIC DNA]</scope>
    <source>
        <strain>972 / ATCC 24843</strain>
    </source>
</reference>
<proteinExistence type="inferred from homology"/>
<gene>
    <name type="ORF">SPAC750.05c</name>
</gene>
<sequence>MIDFVKSRDTVIQKSFFEEFNSQNREMGSFAYSGNSESVWTGENITSIWKTILINETGSYCVAARPMTMDGAEFNLDLMGYSVSEDQINNDEIGIWNYISVAEMGGVLLFLSYWIWTCLHFSKIIFPAQKVICLYIFLFALNQTLQECIEEYVFSSECIKYRQFYSVYEIIDFLRTNFYRLFVIYCALGFGITRTVPKYLMIKGISIVIALCSVYWISLYKDVYVVSEIFDMIQYEVFPAIWVYSICHLLKQCTSVTTYENASKARFFRRMLNAFIFIFCASPMLHYLSNIIFGNFDYRLSVIIGDLFTFMEKIAFPCYIMFPTHNEALAYNRNVAEEAQEKMI</sequence>
<name>YLZ5_SCHPO</name>
<evidence type="ECO:0000250" key="1"/>
<evidence type="ECO:0000255" key="2"/>
<feature type="chain" id="PRO_0000371805" description="Uncharacterized membrane protein C750.05c">
    <location>
        <begin position="1"/>
        <end position="344"/>
    </location>
</feature>
<feature type="topological domain" description="Cytoplasmic" evidence="2">
    <location>
        <begin position="1"/>
        <end position="98"/>
    </location>
</feature>
<feature type="transmembrane region" description="Helical" evidence="2">
    <location>
        <begin position="99"/>
        <end position="119"/>
    </location>
</feature>
<feature type="topological domain" description="Lumenal" evidence="2">
    <location>
        <position position="120"/>
    </location>
</feature>
<feature type="transmembrane region" description="Helical" evidence="2">
    <location>
        <begin position="121"/>
        <end position="141"/>
    </location>
</feature>
<feature type="topological domain" description="Cytoplasmic" evidence="2">
    <location>
        <begin position="142"/>
        <end position="169"/>
    </location>
</feature>
<feature type="transmembrane region" description="Helical" evidence="2">
    <location>
        <begin position="170"/>
        <end position="192"/>
    </location>
</feature>
<feature type="topological domain" description="Lumenal" evidence="2">
    <location>
        <begin position="193"/>
        <end position="198"/>
    </location>
</feature>
<feature type="transmembrane region" description="Helical" evidence="2">
    <location>
        <begin position="199"/>
        <end position="219"/>
    </location>
</feature>
<feature type="topological domain" description="Cytoplasmic" evidence="2">
    <location>
        <begin position="220"/>
        <end position="222"/>
    </location>
</feature>
<feature type="transmembrane region" description="Helical" evidence="2">
    <location>
        <begin position="223"/>
        <end position="243"/>
    </location>
</feature>
<feature type="topological domain" description="Lumenal" evidence="2">
    <location>
        <begin position="244"/>
        <end position="273"/>
    </location>
</feature>
<feature type="transmembrane region" description="Helical" evidence="2">
    <location>
        <begin position="274"/>
        <end position="294"/>
    </location>
</feature>
<feature type="topological domain" description="Cytoplasmic" evidence="2">
    <location>
        <begin position="295"/>
        <end position="344"/>
    </location>
</feature>
<dbReference type="EMBL" id="CU329670">
    <property type="protein sequence ID" value="CAB98256.1"/>
    <property type="molecule type" value="Genomic_DNA"/>
</dbReference>
<dbReference type="BioGRID" id="278062">
    <property type="interactions" value="1"/>
</dbReference>
<dbReference type="STRING" id="284812.Q9P3E6"/>
<dbReference type="PaxDb" id="4896-SPAC750.05c.1"/>
<dbReference type="EnsemblFungi" id="SPAC750.05c.1">
    <property type="protein sequence ID" value="SPAC750.05c.1:pep"/>
    <property type="gene ID" value="SPAC750.05c"/>
</dbReference>
<dbReference type="KEGG" id="spo:2541564"/>
<dbReference type="PomBase" id="SPAC750.05c"/>
<dbReference type="VEuPathDB" id="FungiDB:SPAC750.05c"/>
<dbReference type="HOGENOM" id="CLU_881561_0_0_1"/>
<dbReference type="InParanoid" id="Q9P3E6"/>
<dbReference type="OMA" id="TINICDD"/>
<dbReference type="PRO" id="PR:Q9P3E6"/>
<dbReference type="Proteomes" id="UP000002485">
    <property type="component" value="Chromosome I"/>
</dbReference>
<dbReference type="GO" id="GO:0005789">
    <property type="term" value="C:endoplasmic reticulum membrane"/>
    <property type="evidence" value="ECO:0007669"/>
    <property type="project" value="UniProtKB-SubCell"/>
</dbReference>
<dbReference type="InterPro" id="IPR018291">
    <property type="entry name" value="5TM-prot_SCHPO"/>
</dbReference>
<dbReference type="Pfam" id="PF09437">
    <property type="entry name" value="Pombe_5TM"/>
    <property type="match status" value="1"/>
</dbReference>
<organism>
    <name type="scientific">Schizosaccharomyces pombe (strain 972 / ATCC 24843)</name>
    <name type="common">Fission yeast</name>
    <dbReference type="NCBI Taxonomy" id="284812"/>
    <lineage>
        <taxon>Eukaryota</taxon>
        <taxon>Fungi</taxon>
        <taxon>Dikarya</taxon>
        <taxon>Ascomycota</taxon>
        <taxon>Taphrinomycotina</taxon>
        <taxon>Schizosaccharomycetes</taxon>
        <taxon>Schizosaccharomycetales</taxon>
        <taxon>Schizosaccharomycetaceae</taxon>
        <taxon>Schizosaccharomyces</taxon>
    </lineage>
</organism>